<comment type="function">
    <text evidence="1">Catalyzes the reductive methylation of 2'-deoxyuridine-5'-monophosphate (dUMP) to 2'-deoxythymidine-5'-monophosphate (dTMP) while utilizing 5,10-methylenetetrahydrofolate (mTHF) as the methyl donor and reductant in the reaction, yielding dihydrofolate (DHF) as a by-product. This enzymatic reaction provides an intracellular de novo source of dTMP, an essential precursor for DNA biosynthesis.</text>
</comment>
<comment type="catalytic activity">
    <reaction evidence="1">
        <text>dUMP + (6R)-5,10-methylene-5,6,7,8-tetrahydrofolate = 7,8-dihydrofolate + dTMP</text>
        <dbReference type="Rhea" id="RHEA:12104"/>
        <dbReference type="ChEBI" id="CHEBI:15636"/>
        <dbReference type="ChEBI" id="CHEBI:57451"/>
        <dbReference type="ChEBI" id="CHEBI:63528"/>
        <dbReference type="ChEBI" id="CHEBI:246422"/>
        <dbReference type="EC" id="2.1.1.45"/>
    </reaction>
</comment>
<comment type="pathway">
    <text evidence="1">Pyrimidine metabolism; dTTP biosynthesis.</text>
</comment>
<comment type="subunit">
    <text evidence="1">Homodimer.</text>
</comment>
<comment type="subcellular location">
    <subcellularLocation>
        <location evidence="1">Cytoplasm</location>
    </subcellularLocation>
</comment>
<comment type="similarity">
    <text evidence="1">Belongs to the thymidylate synthase family. Bacterial-type ThyA subfamily.</text>
</comment>
<reference key="1">
    <citation type="journal article" date="2008" name="Genome Biol.">
        <title>Encapsulated in silica: genome, proteome and physiology of the thermophilic bacterium Anoxybacillus flavithermus WK1.</title>
        <authorList>
            <person name="Saw J.H."/>
            <person name="Mountain B.W."/>
            <person name="Feng L."/>
            <person name="Omelchenko M.V."/>
            <person name="Hou S."/>
            <person name="Saito J.A."/>
            <person name="Stott M.B."/>
            <person name="Li D."/>
            <person name="Zhao G."/>
            <person name="Wu J."/>
            <person name="Galperin M.Y."/>
            <person name="Koonin E.V."/>
            <person name="Makarova K.S."/>
            <person name="Wolf Y.I."/>
            <person name="Rigden D.J."/>
            <person name="Dunfield P.F."/>
            <person name="Wang L."/>
            <person name="Alam M."/>
        </authorList>
    </citation>
    <scope>NUCLEOTIDE SEQUENCE [LARGE SCALE GENOMIC DNA]</scope>
    <source>
        <strain>DSM 21510 / WK1</strain>
    </source>
</reference>
<accession>B7GI39</accession>
<evidence type="ECO:0000255" key="1">
    <source>
        <dbReference type="HAMAP-Rule" id="MF_00008"/>
    </source>
</evidence>
<name>TYSY_ANOFW</name>
<feature type="chain" id="PRO_1000197232" description="Thymidylate synthase">
    <location>
        <begin position="1"/>
        <end position="264"/>
    </location>
</feature>
<feature type="active site" description="Nucleophile" evidence="1">
    <location>
        <position position="146"/>
    </location>
</feature>
<feature type="binding site" description="in other chain" evidence="1">
    <location>
        <position position="21"/>
    </location>
    <ligand>
        <name>dUMP</name>
        <dbReference type="ChEBI" id="CHEBI:246422"/>
        <note>ligand shared between dimeric partners</note>
    </ligand>
</feature>
<feature type="binding site" evidence="1">
    <location>
        <position position="51"/>
    </location>
    <ligand>
        <name>(6R)-5,10-methylene-5,6,7,8-tetrahydrofolate</name>
        <dbReference type="ChEBI" id="CHEBI:15636"/>
    </ligand>
</feature>
<feature type="binding site" evidence="1">
    <location>
        <begin position="126"/>
        <end position="127"/>
    </location>
    <ligand>
        <name>dUMP</name>
        <dbReference type="ChEBI" id="CHEBI:246422"/>
        <note>ligand shared between dimeric partners</note>
    </ligand>
</feature>
<feature type="binding site" description="in other chain" evidence="1">
    <location>
        <begin position="166"/>
        <end position="169"/>
    </location>
    <ligand>
        <name>dUMP</name>
        <dbReference type="ChEBI" id="CHEBI:246422"/>
        <note>ligand shared between dimeric partners</note>
    </ligand>
</feature>
<feature type="binding site" evidence="1">
    <location>
        <position position="169"/>
    </location>
    <ligand>
        <name>(6R)-5,10-methylene-5,6,7,8-tetrahydrofolate</name>
        <dbReference type="ChEBI" id="CHEBI:15636"/>
    </ligand>
</feature>
<feature type="binding site" description="in other chain" evidence="1">
    <location>
        <position position="177"/>
    </location>
    <ligand>
        <name>dUMP</name>
        <dbReference type="ChEBI" id="CHEBI:246422"/>
        <note>ligand shared between dimeric partners</note>
    </ligand>
</feature>
<feature type="binding site" description="in other chain" evidence="1">
    <location>
        <begin position="207"/>
        <end position="209"/>
    </location>
    <ligand>
        <name>dUMP</name>
        <dbReference type="ChEBI" id="CHEBI:246422"/>
        <note>ligand shared between dimeric partners</note>
    </ligand>
</feature>
<feature type="binding site" evidence="1">
    <location>
        <position position="263"/>
    </location>
    <ligand>
        <name>(6R)-5,10-methylene-5,6,7,8-tetrahydrofolate</name>
        <dbReference type="ChEBI" id="CHEBI:15636"/>
    </ligand>
</feature>
<organism>
    <name type="scientific">Anoxybacillus flavithermus (strain DSM 21510 / WK1)</name>
    <dbReference type="NCBI Taxonomy" id="491915"/>
    <lineage>
        <taxon>Bacteria</taxon>
        <taxon>Bacillati</taxon>
        <taxon>Bacillota</taxon>
        <taxon>Bacilli</taxon>
        <taxon>Bacillales</taxon>
        <taxon>Anoxybacillaceae</taxon>
        <taxon>Anoxybacillus</taxon>
    </lineage>
</organism>
<protein>
    <recommendedName>
        <fullName evidence="1">Thymidylate synthase</fullName>
        <shortName evidence="1">TS</shortName>
        <shortName evidence="1">TSase</shortName>
        <ecNumber evidence="1">2.1.1.45</ecNumber>
    </recommendedName>
</protein>
<dbReference type="EC" id="2.1.1.45" evidence="1"/>
<dbReference type="EMBL" id="CP000922">
    <property type="protein sequence ID" value="ACJ33821.1"/>
    <property type="molecule type" value="Genomic_DNA"/>
</dbReference>
<dbReference type="RefSeq" id="WP_012575059.1">
    <property type="nucleotide sequence ID" value="NC_011567.1"/>
</dbReference>
<dbReference type="SMR" id="B7GI39"/>
<dbReference type="STRING" id="491915.Aflv_1455"/>
<dbReference type="GeneID" id="7037710"/>
<dbReference type="KEGG" id="afl:Aflv_1455"/>
<dbReference type="eggNOG" id="COG0207">
    <property type="taxonomic scope" value="Bacteria"/>
</dbReference>
<dbReference type="HOGENOM" id="CLU_021669_0_0_9"/>
<dbReference type="UniPathway" id="UPA00575"/>
<dbReference type="Proteomes" id="UP000000742">
    <property type="component" value="Chromosome"/>
</dbReference>
<dbReference type="GO" id="GO:0005829">
    <property type="term" value="C:cytosol"/>
    <property type="evidence" value="ECO:0007669"/>
    <property type="project" value="TreeGrafter"/>
</dbReference>
<dbReference type="GO" id="GO:0004799">
    <property type="term" value="F:thymidylate synthase activity"/>
    <property type="evidence" value="ECO:0007669"/>
    <property type="project" value="UniProtKB-UniRule"/>
</dbReference>
<dbReference type="GO" id="GO:0006231">
    <property type="term" value="P:dTMP biosynthetic process"/>
    <property type="evidence" value="ECO:0007669"/>
    <property type="project" value="UniProtKB-UniRule"/>
</dbReference>
<dbReference type="GO" id="GO:0006235">
    <property type="term" value="P:dTTP biosynthetic process"/>
    <property type="evidence" value="ECO:0007669"/>
    <property type="project" value="UniProtKB-UniRule"/>
</dbReference>
<dbReference type="GO" id="GO:0032259">
    <property type="term" value="P:methylation"/>
    <property type="evidence" value="ECO:0007669"/>
    <property type="project" value="UniProtKB-KW"/>
</dbReference>
<dbReference type="CDD" id="cd00351">
    <property type="entry name" value="TS_Pyrimidine_HMase"/>
    <property type="match status" value="1"/>
</dbReference>
<dbReference type="FunFam" id="3.30.572.10:FF:000013">
    <property type="entry name" value="Thymidylate synthase"/>
    <property type="match status" value="1"/>
</dbReference>
<dbReference type="Gene3D" id="3.30.572.10">
    <property type="entry name" value="Thymidylate synthase/dCMP hydroxymethylase domain"/>
    <property type="match status" value="1"/>
</dbReference>
<dbReference type="HAMAP" id="MF_00008">
    <property type="entry name" value="Thymidy_synth_bact"/>
    <property type="match status" value="1"/>
</dbReference>
<dbReference type="InterPro" id="IPR045097">
    <property type="entry name" value="Thymidate_synth/dCMP_Mease"/>
</dbReference>
<dbReference type="InterPro" id="IPR023451">
    <property type="entry name" value="Thymidate_synth/dCMP_Mease_dom"/>
</dbReference>
<dbReference type="InterPro" id="IPR036926">
    <property type="entry name" value="Thymidate_synth/dCMP_Mease_sf"/>
</dbReference>
<dbReference type="InterPro" id="IPR000398">
    <property type="entry name" value="Thymidylate_synthase"/>
</dbReference>
<dbReference type="InterPro" id="IPR020940">
    <property type="entry name" value="Thymidylate_synthase_AS"/>
</dbReference>
<dbReference type="NCBIfam" id="NF002497">
    <property type="entry name" value="PRK01827.1-3"/>
    <property type="match status" value="1"/>
</dbReference>
<dbReference type="NCBIfam" id="NF002499">
    <property type="entry name" value="PRK01827.1-5"/>
    <property type="match status" value="1"/>
</dbReference>
<dbReference type="NCBIfam" id="TIGR03284">
    <property type="entry name" value="thym_sym"/>
    <property type="match status" value="2"/>
</dbReference>
<dbReference type="PANTHER" id="PTHR11548:SF9">
    <property type="entry name" value="THYMIDYLATE SYNTHASE"/>
    <property type="match status" value="1"/>
</dbReference>
<dbReference type="PANTHER" id="PTHR11548">
    <property type="entry name" value="THYMIDYLATE SYNTHASE 1"/>
    <property type="match status" value="1"/>
</dbReference>
<dbReference type="Pfam" id="PF00303">
    <property type="entry name" value="Thymidylat_synt"/>
    <property type="match status" value="1"/>
</dbReference>
<dbReference type="PRINTS" id="PR00108">
    <property type="entry name" value="THYMDSNTHASE"/>
</dbReference>
<dbReference type="SUPFAM" id="SSF55831">
    <property type="entry name" value="Thymidylate synthase/dCMP hydroxymethylase"/>
    <property type="match status" value="1"/>
</dbReference>
<dbReference type="PROSITE" id="PS00091">
    <property type="entry name" value="THYMIDYLATE_SYNTHASE"/>
    <property type="match status" value="1"/>
</dbReference>
<proteinExistence type="inferred from homology"/>
<sequence length="264" mass="30746">MKQYLQLLEDILQNGVYKDDRTGTGTLSVFGRQLRFDLREGFPLLTTKKLHIRSIIHELLWFLSGDTNIRYLKENGVTIWDEWADEKGDLGPVYGAQWRSWRGADGRTIDQISEVIEQIKTNPNSRRLLVSAWNVAELDHMKLPPCHYAFQFYVENGTLSCMWQQRSVDTFLGLPFNIASYALLTYMVAQQCDLQPKELIFTGGDVHLYMNHIEQAKLQLTREPRPLPKLIIKRKPASIFEYRFEDFEIVDYDPHPHIKADVSV</sequence>
<gene>
    <name evidence="1" type="primary">thyA</name>
    <name type="ordered locus">Aflv_1455</name>
</gene>
<keyword id="KW-0963">Cytoplasm</keyword>
<keyword id="KW-0489">Methyltransferase</keyword>
<keyword id="KW-0545">Nucleotide biosynthesis</keyword>
<keyword id="KW-0808">Transferase</keyword>